<reference key="1">
    <citation type="journal article" date="2007" name="Genome Biol.">
        <title>Characterization and modeling of the Haemophilus influenzae core and supragenomes based on the complete genomic sequences of Rd and 12 clinical nontypeable strains.</title>
        <authorList>
            <person name="Hogg J.S."/>
            <person name="Hu F.Z."/>
            <person name="Janto B."/>
            <person name="Boissy R."/>
            <person name="Hayes J."/>
            <person name="Keefe R."/>
            <person name="Post J.C."/>
            <person name="Ehrlich G.D."/>
        </authorList>
    </citation>
    <scope>NUCLEOTIDE SEQUENCE [LARGE SCALE GENOMIC DNA]</scope>
    <source>
        <strain>PittGG</strain>
    </source>
</reference>
<dbReference type="EMBL" id="CP000672">
    <property type="protein sequence ID" value="ABR00394.1"/>
    <property type="molecule type" value="Genomic_DNA"/>
</dbReference>
<dbReference type="SMR" id="A5UHY8"/>
<dbReference type="KEGG" id="hiq:CGSHiGG_07705"/>
<dbReference type="HOGENOM" id="CLU_063050_0_1_6"/>
<dbReference type="Proteomes" id="UP000001990">
    <property type="component" value="Chromosome"/>
</dbReference>
<dbReference type="GO" id="GO:0043590">
    <property type="term" value="C:bacterial nucleoid"/>
    <property type="evidence" value="ECO:0007669"/>
    <property type="project" value="TreeGrafter"/>
</dbReference>
<dbReference type="GO" id="GO:0005737">
    <property type="term" value="C:cytoplasm"/>
    <property type="evidence" value="ECO:0007669"/>
    <property type="project" value="UniProtKB-UniRule"/>
</dbReference>
<dbReference type="GO" id="GO:0003690">
    <property type="term" value="F:double-stranded DNA binding"/>
    <property type="evidence" value="ECO:0007669"/>
    <property type="project" value="TreeGrafter"/>
</dbReference>
<dbReference type="GO" id="GO:0003727">
    <property type="term" value="F:single-stranded RNA binding"/>
    <property type="evidence" value="ECO:0007669"/>
    <property type="project" value="TreeGrafter"/>
</dbReference>
<dbReference type="HAMAP" id="MF_00730">
    <property type="entry name" value="NdpA"/>
    <property type="match status" value="1"/>
</dbReference>
<dbReference type="InterPro" id="IPR007358">
    <property type="entry name" value="Nucleoid_associated_NdpA"/>
</dbReference>
<dbReference type="NCBIfam" id="NF001557">
    <property type="entry name" value="PRK00378.1"/>
    <property type="match status" value="1"/>
</dbReference>
<dbReference type="PANTHER" id="PTHR38772">
    <property type="match status" value="1"/>
</dbReference>
<dbReference type="PANTHER" id="PTHR38772:SF1">
    <property type="entry name" value="NUCLEOID-ASSOCIATED PROTEIN YEJK"/>
    <property type="match status" value="1"/>
</dbReference>
<dbReference type="Pfam" id="PF04245">
    <property type="entry name" value="NA37"/>
    <property type="match status" value="1"/>
</dbReference>
<protein>
    <recommendedName>
        <fullName evidence="1">Nucleoid-associated protein CGSHiGG_07705</fullName>
    </recommendedName>
</protein>
<evidence type="ECO:0000255" key="1">
    <source>
        <dbReference type="HAMAP-Rule" id="MF_00730"/>
    </source>
</evidence>
<keyword id="KW-0963">Cytoplasm</keyword>
<organism>
    <name type="scientific">Haemophilus influenzae (strain PittGG)</name>
    <dbReference type="NCBI Taxonomy" id="374931"/>
    <lineage>
        <taxon>Bacteria</taxon>
        <taxon>Pseudomonadati</taxon>
        <taxon>Pseudomonadota</taxon>
        <taxon>Gammaproteobacteria</taxon>
        <taxon>Pasteurellales</taxon>
        <taxon>Pasteurellaceae</taxon>
        <taxon>Haemophilus</taxon>
    </lineage>
</organism>
<proteinExistence type="inferred from homology"/>
<sequence length="338" mass="38526">MSITVNQIVLHQLVKNVDGDSIKMESVLRDELLSITPEVEQMMLQLHQGYQNKAKAFGVFQEKSIFAQHLNRLLEQEIEFLGFSQYSTKLLADELGKYNFVESGTLILCQYNFLATDYLFIALLDSRHSMLVDEHLDIRRTEYLDITQFDIAARINLTDLQVNANSNRYLTFIKGRVGRKISDFFMDFLGAEEGLNPQVQNQCLLQAVSDYCDQGELNKEQTQAVKKQVFEYCKGQLSNGNNIKLRELSDSLPTLNEQPFVVFTEEQNYGLEESIPPIRSTLKSLTKFSGSGKGVTLSFDAELLNTRIQWDPMTDTLTIKGLPPNLKDQLQKALKSEN</sequence>
<name>NDPA_HAEIG</name>
<gene>
    <name type="ordered locus">CGSHiGG_07705</name>
</gene>
<feature type="chain" id="PRO_1000045927" description="Nucleoid-associated protein CGSHiGG_07705">
    <location>
        <begin position="1"/>
        <end position="338"/>
    </location>
</feature>
<accession>A5UHY8</accession>
<comment type="subcellular location">
    <subcellularLocation>
        <location evidence="1">Cytoplasm</location>
        <location evidence="1">Nucleoid</location>
    </subcellularLocation>
</comment>
<comment type="similarity">
    <text evidence="1">Belongs to the YejK family.</text>
</comment>